<accession>Q8EK63</accession>
<protein>
    <recommendedName>
        <fullName evidence="1">Large ribosomal subunit protein uL22</fullName>
    </recommendedName>
    <alternativeName>
        <fullName evidence="2">50S ribosomal protein L22</fullName>
    </alternativeName>
</protein>
<feature type="chain" id="PRO_0000125217" description="Large ribosomal subunit protein uL22">
    <location>
        <begin position="1"/>
        <end position="110"/>
    </location>
</feature>
<keyword id="KW-1185">Reference proteome</keyword>
<keyword id="KW-0687">Ribonucleoprotein</keyword>
<keyword id="KW-0689">Ribosomal protein</keyword>
<keyword id="KW-0694">RNA-binding</keyword>
<keyword id="KW-0699">rRNA-binding</keyword>
<comment type="function">
    <text evidence="1">This protein binds specifically to 23S rRNA; its binding is stimulated by other ribosomal proteins, e.g. L4, L17, and L20. It is important during the early stages of 50S assembly. It makes multiple contacts with different domains of the 23S rRNA in the assembled 50S subunit and ribosome (By similarity).</text>
</comment>
<comment type="function">
    <text evidence="1">The globular domain of the protein is located near the polypeptide exit tunnel on the outside of the subunit, while an extended beta-hairpin is found that lines the wall of the exit tunnel in the center of the 70S ribosome.</text>
</comment>
<comment type="subunit">
    <text evidence="1">Part of the 50S ribosomal subunit.</text>
</comment>
<comment type="similarity">
    <text evidence="1">Belongs to the universal ribosomal protein uL22 family.</text>
</comment>
<name>RL22_SHEON</name>
<proteinExistence type="inferred from homology"/>
<organism>
    <name type="scientific">Shewanella oneidensis (strain ATCC 700550 / JCM 31522 / CIP 106686 / LMG 19005 / NCIMB 14063 / MR-1)</name>
    <dbReference type="NCBI Taxonomy" id="211586"/>
    <lineage>
        <taxon>Bacteria</taxon>
        <taxon>Pseudomonadati</taxon>
        <taxon>Pseudomonadota</taxon>
        <taxon>Gammaproteobacteria</taxon>
        <taxon>Alteromonadales</taxon>
        <taxon>Shewanellaceae</taxon>
        <taxon>Shewanella</taxon>
    </lineage>
</organism>
<evidence type="ECO:0000255" key="1">
    <source>
        <dbReference type="HAMAP-Rule" id="MF_01331"/>
    </source>
</evidence>
<evidence type="ECO:0000305" key="2"/>
<sequence length="110" mass="12071">MEVLAKHRFARTSAQKARLVADQIRGLPVAKALEILTFSPKKAAVLVKKVLDSAIANAEHNEGADIDELKVGAVFVDEGPTMKRIMPRAKGRADRIMKRTSHITVVVSDR</sequence>
<dbReference type="EMBL" id="AE014299">
    <property type="protein sequence ID" value="AAN53321.1"/>
    <property type="molecule type" value="Genomic_DNA"/>
</dbReference>
<dbReference type="RefSeq" id="NP_715876.1">
    <property type="nucleotide sequence ID" value="NC_004347.2"/>
</dbReference>
<dbReference type="RefSeq" id="WP_006083595.1">
    <property type="nucleotide sequence ID" value="NZ_CP053946.1"/>
</dbReference>
<dbReference type="SMR" id="Q8EK63"/>
<dbReference type="STRING" id="211586.SO_0236"/>
<dbReference type="PaxDb" id="211586-SO_0236"/>
<dbReference type="GeneID" id="94726191"/>
<dbReference type="KEGG" id="son:SO_0236"/>
<dbReference type="PATRIC" id="fig|211586.12.peg.224"/>
<dbReference type="eggNOG" id="COG0091">
    <property type="taxonomic scope" value="Bacteria"/>
</dbReference>
<dbReference type="HOGENOM" id="CLU_083987_3_3_6"/>
<dbReference type="OrthoDB" id="9805969at2"/>
<dbReference type="PhylomeDB" id="Q8EK63"/>
<dbReference type="BioCyc" id="SONE211586:G1GMP-225-MONOMER"/>
<dbReference type="PRO" id="PR:Q8EK63"/>
<dbReference type="Proteomes" id="UP000008186">
    <property type="component" value="Chromosome"/>
</dbReference>
<dbReference type="GO" id="GO:0022625">
    <property type="term" value="C:cytosolic large ribosomal subunit"/>
    <property type="evidence" value="ECO:0000318"/>
    <property type="project" value="GO_Central"/>
</dbReference>
<dbReference type="GO" id="GO:0019843">
    <property type="term" value="F:rRNA binding"/>
    <property type="evidence" value="ECO:0007669"/>
    <property type="project" value="UniProtKB-UniRule"/>
</dbReference>
<dbReference type="GO" id="GO:0003735">
    <property type="term" value="F:structural constituent of ribosome"/>
    <property type="evidence" value="ECO:0000318"/>
    <property type="project" value="GO_Central"/>
</dbReference>
<dbReference type="GO" id="GO:0006412">
    <property type="term" value="P:translation"/>
    <property type="evidence" value="ECO:0000318"/>
    <property type="project" value="GO_Central"/>
</dbReference>
<dbReference type="CDD" id="cd00336">
    <property type="entry name" value="Ribosomal_L22"/>
    <property type="match status" value="1"/>
</dbReference>
<dbReference type="FunFam" id="3.90.470.10:FF:000001">
    <property type="entry name" value="50S ribosomal protein L22"/>
    <property type="match status" value="1"/>
</dbReference>
<dbReference type="Gene3D" id="3.90.470.10">
    <property type="entry name" value="Ribosomal protein L22/L17"/>
    <property type="match status" value="1"/>
</dbReference>
<dbReference type="HAMAP" id="MF_01331_B">
    <property type="entry name" value="Ribosomal_uL22_B"/>
    <property type="match status" value="1"/>
</dbReference>
<dbReference type="InterPro" id="IPR001063">
    <property type="entry name" value="Ribosomal_uL22"/>
</dbReference>
<dbReference type="InterPro" id="IPR005727">
    <property type="entry name" value="Ribosomal_uL22_bac/chlpt-type"/>
</dbReference>
<dbReference type="InterPro" id="IPR047867">
    <property type="entry name" value="Ribosomal_uL22_bac/org-type"/>
</dbReference>
<dbReference type="InterPro" id="IPR018260">
    <property type="entry name" value="Ribosomal_uL22_CS"/>
</dbReference>
<dbReference type="InterPro" id="IPR036394">
    <property type="entry name" value="Ribosomal_uL22_sf"/>
</dbReference>
<dbReference type="NCBIfam" id="TIGR01044">
    <property type="entry name" value="rplV_bact"/>
    <property type="match status" value="1"/>
</dbReference>
<dbReference type="PANTHER" id="PTHR13501">
    <property type="entry name" value="CHLOROPLAST 50S RIBOSOMAL PROTEIN L22-RELATED"/>
    <property type="match status" value="1"/>
</dbReference>
<dbReference type="PANTHER" id="PTHR13501:SF8">
    <property type="entry name" value="LARGE RIBOSOMAL SUBUNIT PROTEIN UL22M"/>
    <property type="match status" value="1"/>
</dbReference>
<dbReference type="Pfam" id="PF00237">
    <property type="entry name" value="Ribosomal_L22"/>
    <property type="match status" value="1"/>
</dbReference>
<dbReference type="SUPFAM" id="SSF54843">
    <property type="entry name" value="Ribosomal protein L22"/>
    <property type="match status" value="1"/>
</dbReference>
<dbReference type="PROSITE" id="PS00464">
    <property type="entry name" value="RIBOSOMAL_L22"/>
    <property type="match status" value="1"/>
</dbReference>
<reference key="1">
    <citation type="journal article" date="2002" name="Nat. Biotechnol.">
        <title>Genome sequence of the dissimilatory metal ion-reducing bacterium Shewanella oneidensis.</title>
        <authorList>
            <person name="Heidelberg J.F."/>
            <person name="Paulsen I.T."/>
            <person name="Nelson K.E."/>
            <person name="Gaidos E.J."/>
            <person name="Nelson W.C."/>
            <person name="Read T.D."/>
            <person name="Eisen J.A."/>
            <person name="Seshadri R."/>
            <person name="Ward N.L."/>
            <person name="Methe B.A."/>
            <person name="Clayton R.A."/>
            <person name="Meyer T."/>
            <person name="Tsapin A."/>
            <person name="Scott J."/>
            <person name="Beanan M.J."/>
            <person name="Brinkac L.M."/>
            <person name="Daugherty S.C."/>
            <person name="DeBoy R.T."/>
            <person name="Dodson R.J."/>
            <person name="Durkin A.S."/>
            <person name="Haft D.H."/>
            <person name="Kolonay J.F."/>
            <person name="Madupu R."/>
            <person name="Peterson J.D."/>
            <person name="Umayam L.A."/>
            <person name="White O."/>
            <person name="Wolf A.M."/>
            <person name="Vamathevan J.J."/>
            <person name="Weidman J.F."/>
            <person name="Impraim M."/>
            <person name="Lee K."/>
            <person name="Berry K.J."/>
            <person name="Lee C."/>
            <person name="Mueller J."/>
            <person name="Khouri H.M."/>
            <person name="Gill J."/>
            <person name="Utterback T.R."/>
            <person name="McDonald L.A."/>
            <person name="Feldblyum T.V."/>
            <person name="Smith H.O."/>
            <person name="Venter J.C."/>
            <person name="Nealson K.H."/>
            <person name="Fraser C.M."/>
        </authorList>
    </citation>
    <scope>NUCLEOTIDE SEQUENCE [LARGE SCALE GENOMIC DNA]</scope>
    <source>
        <strain>ATCC 700550 / JCM 31522 / CIP 106686 / LMG 19005 / NCIMB 14063 / MR-1</strain>
    </source>
</reference>
<gene>
    <name evidence="1" type="primary">rplV</name>
    <name type="ordered locus">SO_0236</name>
</gene>